<accession>Q96LB9</accession>
<accession>A1A4U8</accession>
<accession>Q5SY65</accession>
<name>PGRP3_HUMAN</name>
<proteinExistence type="evidence at protein level"/>
<organism>
    <name type="scientific">Homo sapiens</name>
    <name type="common">Human</name>
    <dbReference type="NCBI Taxonomy" id="9606"/>
    <lineage>
        <taxon>Eukaryota</taxon>
        <taxon>Metazoa</taxon>
        <taxon>Chordata</taxon>
        <taxon>Craniata</taxon>
        <taxon>Vertebrata</taxon>
        <taxon>Euteleostomi</taxon>
        <taxon>Mammalia</taxon>
        <taxon>Eutheria</taxon>
        <taxon>Euarchontoglires</taxon>
        <taxon>Primates</taxon>
        <taxon>Haplorrhini</taxon>
        <taxon>Catarrhini</taxon>
        <taxon>Hominidae</taxon>
        <taxon>Homo</taxon>
    </lineage>
</organism>
<keyword id="KW-0002">3D-structure</keyword>
<keyword id="KW-0044">Antibiotic</keyword>
<keyword id="KW-0929">Antimicrobial</keyword>
<keyword id="KW-1015">Disulfide bond</keyword>
<keyword id="KW-0325">Glycoprotein</keyword>
<keyword id="KW-0391">Immunity</keyword>
<keyword id="KW-0399">Innate immunity</keyword>
<keyword id="KW-1267">Proteomics identification</keyword>
<keyword id="KW-1185">Reference proteome</keyword>
<keyword id="KW-0677">Repeat</keyword>
<keyword id="KW-0964">Secreted</keyword>
<keyword id="KW-0732">Signal</keyword>
<protein>
    <recommendedName>
        <fullName>Peptidoglycan recognition protein 3</fullName>
    </recommendedName>
    <alternativeName>
        <fullName>Peptidoglycan recognition protein I-alpha</fullName>
        <shortName>PGLYRPIalpha</shortName>
        <shortName>PGRP-I-alpha</shortName>
    </alternativeName>
    <alternativeName>
        <fullName>Peptidoglycan recognition protein intermediate alpha</fullName>
    </alternativeName>
</protein>
<dbReference type="EMBL" id="AY035376">
    <property type="protein sequence ID" value="AAK72484.1"/>
    <property type="molecule type" value="mRNA"/>
</dbReference>
<dbReference type="EMBL" id="AL591704">
    <property type="status" value="NOT_ANNOTATED_CDS"/>
    <property type="molecule type" value="Genomic_DNA"/>
</dbReference>
<dbReference type="EMBL" id="AL161636">
    <property type="status" value="NOT_ANNOTATED_CDS"/>
    <property type="molecule type" value="Genomic_DNA"/>
</dbReference>
<dbReference type="EMBL" id="BC069741">
    <property type="protein sequence ID" value="AAH69741.1"/>
    <property type="molecule type" value="mRNA"/>
</dbReference>
<dbReference type="EMBL" id="BC069798">
    <property type="protein sequence ID" value="AAH69798.1"/>
    <property type="molecule type" value="mRNA"/>
</dbReference>
<dbReference type="EMBL" id="BC069801">
    <property type="protein sequence ID" value="AAH69801.1"/>
    <property type="molecule type" value="mRNA"/>
</dbReference>
<dbReference type="EMBL" id="BC128114">
    <property type="protein sequence ID" value="AAI28115.1"/>
    <property type="molecule type" value="mRNA"/>
</dbReference>
<dbReference type="EMBL" id="BC128115">
    <property type="protein sequence ID" value="AAI28116.1"/>
    <property type="molecule type" value="mRNA"/>
</dbReference>
<dbReference type="CCDS" id="CCDS1035.1"/>
<dbReference type="RefSeq" id="NP_443123.1">
    <property type="nucleotide sequence ID" value="NM_052891.3"/>
</dbReference>
<dbReference type="RefSeq" id="XP_011507421.1">
    <property type="nucleotide sequence ID" value="XM_011509119.1"/>
</dbReference>
<dbReference type="PDB" id="1SK3">
    <property type="method" value="X-ray"/>
    <property type="resolution" value="2.80 A"/>
    <property type="chains" value="A=177-341"/>
</dbReference>
<dbReference type="PDB" id="1SK4">
    <property type="method" value="X-ray"/>
    <property type="resolution" value="1.65 A"/>
    <property type="chains" value="A=179-341"/>
</dbReference>
<dbReference type="PDB" id="1TWQ">
    <property type="method" value="X-ray"/>
    <property type="resolution" value="2.30 A"/>
    <property type="chains" value="A=177-341"/>
</dbReference>
<dbReference type="PDB" id="2APH">
    <property type="method" value="X-ray"/>
    <property type="resolution" value="2.10 A"/>
    <property type="chains" value="A/B=177-341"/>
</dbReference>
<dbReference type="PDBsum" id="1SK3"/>
<dbReference type="PDBsum" id="1SK4"/>
<dbReference type="PDBsum" id="1TWQ"/>
<dbReference type="PDBsum" id="2APH"/>
<dbReference type="SMR" id="Q96LB9"/>
<dbReference type="BioGRID" id="125341">
    <property type="interactions" value="16"/>
</dbReference>
<dbReference type="FunCoup" id="Q96LB9">
    <property type="interactions" value="7"/>
</dbReference>
<dbReference type="IntAct" id="Q96LB9">
    <property type="interactions" value="20"/>
</dbReference>
<dbReference type="STRING" id="9606.ENSP00000290722"/>
<dbReference type="DrugBank" id="DB04736">
    <property type="generic name" value="2-ACETAMIDO-2-DEOXY-BETA-D-GLUCOPYRANOSE(BETA1-4)-2-ACETAMIDO-1,6-ANHYDRO-3-O-[(R)-1-CARBOXYETHYL]-2-DEOXY-BETA-D-GLUCOPYRANOSE-L-ALANYL-GAMMA-D-GLUTAMYL-MESO-DIAMINOPIMELYL-D-ALANINE"/>
</dbReference>
<dbReference type="GlyCosmos" id="Q96LB9">
    <property type="glycosylation" value="1 site, No reported glycans"/>
</dbReference>
<dbReference type="GlyGen" id="Q96LB9">
    <property type="glycosylation" value="1 site"/>
</dbReference>
<dbReference type="iPTMnet" id="Q96LB9"/>
<dbReference type="PhosphoSitePlus" id="Q96LB9"/>
<dbReference type="BioMuta" id="PGLYRP3"/>
<dbReference type="DMDM" id="38604974"/>
<dbReference type="MassIVE" id="Q96LB9"/>
<dbReference type="PaxDb" id="9606-ENSP00000290722"/>
<dbReference type="PeptideAtlas" id="Q96LB9"/>
<dbReference type="Antibodypedia" id="34121">
    <property type="antibodies" value="68 antibodies from 24 providers"/>
</dbReference>
<dbReference type="DNASU" id="114771"/>
<dbReference type="Ensembl" id="ENST00000290722.1">
    <property type="protein sequence ID" value="ENSP00000290722.1"/>
    <property type="gene ID" value="ENSG00000159527.4"/>
</dbReference>
<dbReference type="Ensembl" id="ENST00000683862.1">
    <property type="protein sequence ID" value="ENSP00000507327.1"/>
    <property type="gene ID" value="ENSG00000159527.4"/>
</dbReference>
<dbReference type="GeneID" id="114771"/>
<dbReference type="KEGG" id="hsa:114771"/>
<dbReference type="MANE-Select" id="ENST00000683862.1">
    <property type="protein sequence ID" value="ENSP00000507327.1"/>
    <property type="RefSeq nucleotide sequence ID" value="NM_052891.3"/>
    <property type="RefSeq protein sequence ID" value="NP_443123.1"/>
</dbReference>
<dbReference type="UCSC" id="uc001fbn.1">
    <property type="organism name" value="human"/>
</dbReference>
<dbReference type="AGR" id="HGNC:30014"/>
<dbReference type="CTD" id="114771"/>
<dbReference type="DisGeNET" id="114771"/>
<dbReference type="GeneCards" id="PGLYRP3"/>
<dbReference type="HGNC" id="HGNC:30014">
    <property type="gene designation" value="PGLYRP3"/>
</dbReference>
<dbReference type="HPA" id="ENSG00000159527">
    <property type="expression patterns" value="Tissue enhanced (esophagus, skin, vagina)"/>
</dbReference>
<dbReference type="MIM" id="608197">
    <property type="type" value="gene"/>
</dbReference>
<dbReference type="neXtProt" id="NX_Q96LB9"/>
<dbReference type="OpenTargets" id="ENSG00000159527"/>
<dbReference type="PharmGKB" id="PA134861692"/>
<dbReference type="VEuPathDB" id="HostDB:ENSG00000159527"/>
<dbReference type="eggNOG" id="ENOG502S2KY">
    <property type="taxonomic scope" value="Eukaryota"/>
</dbReference>
<dbReference type="GeneTree" id="ENSGT00940000162657"/>
<dbReference type="HOGENOM" id="CLU_037559_1_0_1"/>
<dbReference type="InParanoid" id="Q96LB9"/>
<dbReference type="OMA" id="SVYTIGW"/>
<dbReference type="OrthoDB" id="10001926at2759"/>
<dbReference type="PAN-GO" id="Q96LB9">
    <property type="GO annotations" value="0 GO annotations based on evolutionary models"/>
</dbReference>
<dbReference type="PhylomeDB" id="Q96LB9"/>
<dbReference type="TreeFam" id="TF323898"/>
<dbReference type="PathwayCommons" id="Q96LB9"/>
<dbReference type="Reactome" id="R-HSA-6803157">
    <property type="pathway name" value="Antimicrobial peptides"/>
</dbReference>
<dbReference type="SignaLink" id="Q96LB9"/>
<dbReference type="BioGRID-ORCS" id="114771">
    <property type="hits" value="10 hits in 1157 CRISPR screens"/>
</dbReference>
<dbReference type="EvolutionaryTrace" id="Q96LB9"/>
<dbReference type="GenomeRNAi" id="114771"/>
<dbReference type="Pharos" id="Q96LB9">
    <property type="development level" value="Tbio"/>
</dbReference>
<dbReference type="PRO" id="PR:Q96LB9"/>
<dbReference type="Proteomes" id="UP000005640">
    <property type="component" value="Chromosome 1"/>
</dbReference>
<dbReference type="RNAct" id="Q96LB9">
    <property type="molecule type" value="protein"/>
</dbReference>
<dbReference type="Bgee" id="ENSG00000159527">
    <property type="expression patterns" value="Expressed in lower esophagus mucosa and 51 other cell types or tissues"/>
</dbReference>
<dbReference type="GO" id="GO:0005576">
    <property type="term" value="C:extracellular region"/>
    <property type="evidence" value="ECO:0000304"/>
    <property type="project" value="Reactome"/>
</dbReference>
<dbReference type="GO" id="GO:0016020">
    <property type="term" value="C:membrane"/>
    <property type="evidence" value="ECO:0000303"/>
    <property type="project" value="UniProtKB"/>
</dbReference>
<dbReference type="GO" id="GO:0032991">
    <property type="term" value="C:protein-containing complex"/>
    <property type="evidence" value="ECO:0000314"/>
    <property type="project" value="UniProtKB"/>
</dbReference>
<dbReference type="GO" id="GO:0008745">
    <property type="term" value="F:N-acetylmuramoyl-L-alanine amidase activity"/>
    <property type="evidence" value="ECO:0007669"/>
    <property type="project" value="InterPro"/>
</dbReference>
<dbReference type="GO" id="GO:0042834">
    <property type="term" value="F:peptidoglycan binding"/>
    <property type="evidence" value="ECO:0000314"/>
    <property type="project" value="UniProtKB"/>
</dbReference>
<dbReference type="GO" id="GO:0016019">
    <property type="term" value="F:peptidoglycan immune receptor activity"/>
    <property type="evidence" value="ECO:0000314"/>
    <property type="project" value="UniProtKB"/>
</dbReference>
<dbReference type="GO" id="GO:0046982">
    <property type="term" value="F:protein heterodimerization activity"/>
    <property type="evidence" value="ECO:0000353"/>
    <property type="project" value="UniProtKB"/>
</dbReference>
<dbReference type="GO" id="GO:0008270">
    <property type="term" value="F:zinc ion binding"/>
    <property type="evidence" value="ECO:0007669"/>
    <property type="project" value="InterPro"/>
</dbReference>
<dbReference type="GO" id="GO:0061844">
    <property type="term" value="P:antimicrobial humoral immune response mediated by antimicrobial peptide"/>
    <property type="evidence" value="ECO:0000314"/>
    <property type="project" value="UniProtKB"/>
</dbReference>
<dbReference type="GO" id="GO:0051701">
    <property type="term" value="P:biological process involved in interaction with host"/>
    <property type="evidence" value="ECO:0007669"/>
    <property type="project" value="Ensembl"/>
</dbReference>
<dbReference type="GO" id="GO:0042742">
    <property type="term" value="P:defense response to bacterium"/>
    <property type="evidence" value="ECO:0000318"/>
    <property type="project" value="GO_Central"/>
</dbReference>
<dbReference type="GO" id="GO:0050830">
    <property type="term" value="P:defense response to Gram-positive bacterium"/>
    <property type="evidence" value="ECO:0000314"/>
    <property type="project" value="UniProtKB"/>
</dbReference>
<dbReference type="GO" id="GO:0016045">
    <property type="term" value="P:detection of bacterium"/>
    <property type="evidence" value="ECO:0000314"/>
    <property type="project" value="UniProtKB"/>
</dbReference>
<dbReference type="GO" id="GO:0006955">
    <property type="term" value="P:immune response"/>
    <property type="evidence" value="ECO:0000318"/>
    <property type="project" value="GO_Central"/>
</dbReference>
<dbReference type="GO" id="GO:0045087">
    <property type="term" value="P:innate immune response"/>
    <property type="evidence" value="ECO:0000303"/>
    <property type="project" value="UniProtKB"/>
</dbReference>
<dbReference type="GO" id="GO:0031640">
    <property type="term" value="P:killing of cells of another organism"/>
    <property type="evidence" value="ECO:0000314"/>
    <property type="project" value="UniProtKB"/>
</dbReference>
<dbReference type="GO" id="GO:0032827">
    <property type="term" value="P:negative regulation of natural killer cell differentiation involved in immune response"/>
    <property type="evidence" value="ECO:0007669"/>
    <property type="project" value="Ensembl"/>
</dbReference>
<dbReference type="GO" id="GO:0032689">
    <property type="term" value="P:negative regulation of type II interferon production"/>
    <property type="evidence" value="ECO:0007669"/>
    <property type="project" value="Ensembl"/>
</dbReference>
<dbReference type="GO" id="GO:0009253">
    <property type="term" value="P:peptidoglycan catabolic process"/>
    <property type="evidence" value="ECO:0007669"/>
    <property type="project" value="InterPro"/>
</dbReference>
<dbReference type="CDD" id="cd06583">
    <property type="entry name" value="PGRP"/>
    <property type="match status" value="2"/>
</dbReference>
<dbReference type="FunFam" id="3.40.80.10:FF:000001">
    <property type="entry name" value="Peptidoglycan recognition protein 1"/>
    <property type="match status" value="1"/>
</dbReference>
<dbReference type="FunFam" id="3.40.80.10:FF:000004">
    <property type="entry name" value="Peptidoglycan recognition protein 4"/>
    <property type="match status" value="1"/>
</dbReference>
<dbReference type="Gene3D" id="3.40.80.10">
    <property type="entry name" value="Peptidoglycan recognition protein-like"/>
    <property type="match status" value="2"/>
</dbReference>
<dbReference type="InterPro" id="IPR036505">
    <property type="entry name" value="Amidase/PGRP_sf"/>
</dbReference>
<dbReference type="InterPro" id="IPR002502">
    <property type="entry name" value="Amidase_domain"/>
</dbReference>
<dbReference type="InterPro" id="IPR015510">
    <property type="entry name" value="PGRP"/>
</dbReference>
<dbReference type="InterPro" id="IPR006619">
    <property type="entry name" value="PGRP_domain_met/bac"/>
</dbReference>
<dbReference type="PANTHER" id="PTHR11022">
    <property type="entry name" value="PEPTIDOGLYCAN RECOGNITION PROTEIN"/>
    <property type="match status" value="1"/>
</dbReference>
<dbReference type="PANTHER" id="PTHR11022:SF12">
    <property type="entry name" value="PEPTIDOGLYCAN RECOGNITION PROTEIN 3"/>
    <property type="match status" value="1"/>
</dbReference>
<dbReference type="Pfam" id="PF01510">
    <property type="entry name" value="Amidase_2"/>
    <property type="match status" value="2"/>
</dbReference>
<dbReference type="SMART" id="SM00644">
    <property type="entry name" value="Ami_2"/>
    <property type="match status" value="2"/>
</dbReference>
<dbReference type="SMART" id="SM00701">
    <property type="entry name" value="PGRP"/>
    <property type="match status" value="2"/>
</dbReference>
<dbReference type="SUPFAM" id="SSF55846">
    <property type="entry name" value="N-acetylmuramoyl-L-alanine amidase-like"/>
    <property type="match status" value="2"/>
</dbReference>
<gene>
    <name type="primary">PGLYRP3</name>
    <name type="synonym">PGRPIA</name>
</gene>
<reference key="1">
    <citation type="journal article" date="2001" name="J. Biol. Chem.">
        <title>Peptidoglycan recognition proteins: a novel family of four human innate immunity pattern recognition molecules.</title>
        <authorList>
            <person name="Liu C."/>
            <person name="Xu Z."/>
            <person name="Gupta D."/>
            <person name="Dziarski R."/>
        </authorList>
    </citation>
    <scope>NUCLEOTIDE SEQUENCE [MRNA]</scope>
    <scope>TISSUE SPECIFICITY</scope>
</reference>
<reference key="2">
    <citation type="journal article" date="2006" name="Nature">
        <title>The DNA sequence and biological annotation of human chromosome 1.</title>
        <authorList>
            <person name="Gregory S.G."/>
            <person name="Barlow K.F."/>
            <person name="McLay K.E."/>
            <person name="Kaul R."/>
            <person name="Swarbreck D."/>
            <person name="Dunham A."/>
            <person name="Scott C.E."/>
            <person name="Howe K.L."/>
            <person name="Woodfine K."/>
            <person name="Spencer C.C.A."/>
            <person name="Jones M.C."/>
            <person name="Gillson C."/>
            <person name="Searle S."/>
            <person name="Zhou Y."/>
            <person name="Kokocinski F."/>
            <person name="McDonald L."/>
            <person name="Evans R."/>
            <person name="Phillips K."/>
            <person name="Atkinson A."/>
            <person name="Cooper R."/>
            <person name="Jones C."/>
            <person name="Hall R.E."/>
            <person name="Andrews T.D."/>
            <person name="Lloyd C."/>
            <person name="Ainscough R."/>
            <person name="Almeida J.P."/>
            <person name="Ambrose K.D."/>
            <person name="Anderson F."/>
            <person name="Andrew R.W."/>
            <person name="Ashwell R.I.S."/>
            <person name="Aubin K."/>
            <person name="Babbage A.K."/>
            <person name="Bagguley C.L."/>
            <person name="Bailey J."/>
            <person name="Beasley H."/>
            <person name="Bethel G."/>
            <person name="Bird C.P."/>
            <person name="Bray-Allen S."/>
            <person name="Brown J.Y."/>
            <person name="Brown A.J."/>
            <person name="Buckley D."/>
            <person name="Burton J."/>
            <person name="Bye J."/>
            <person name="Carder C."/>
            <person name="Chapman J.C."/>
            <person name="Clark S.Y."/>
            <person name="Clarke G."/>
            <person name="Clee C."/>
            <person name="Cobley V."/>
            <person name="Collier R.E."/>
            <person name="Corby N."/>
            <person name="Coville G.J."/>
            <person name="Davies J."/>
            <person name="Deadman R."/>
            <person name="Dunn M."/>
            <person name="Earthrowl M."/>
            <person name="Ellington A.G."/>
            <person name="Errington H."/>
            <person name="Frankish A."/>
            <person name="Frankland J."/>
            <person name="French L."/>
            <person name="Garner P."/>
            <person name="Garnett J."/>
            <person name="Gay L."/>
            <person name="Ghori M.R.J."/>
            <person name="Gibson R."/>
            <person name="Gilby L.M."/>
            <person name="Gillett W."/>
            <person name="Glithero R.J."/>
            <person name="Grafham D.V."/>
            <person name="Griffiths C."/>
            <person name="Griffiths-Jones S."/>
            <person name="Grocock R."/>
            <person name="Hammond S."/>
            <person name="Harrison E.S.I."/>
            <person name="Hart E."/>
            <person name="Haugen E."/>
            <person name="Heath P.D."/>
            <person name="Holmes S."/>
            <person name="Holt K."/>
            <person name="Howden P.J."/>
            <person name="Hunt A.R."/>
            <person name="Hunt S.E."/>
            <person name="Hunter G."/>
            <person name="Isherwood J."/>
            <person name="James R."/>
            <person name="Johnson C."/>
            <person name="Johnson D."/>
            <person name="Joy A."/>
            <person name="Kay M."/>
            <person name="Kershaw J.K."/>
            <person name="Kibukawa M."/>
            <person name="Kimberley A.M."/>
            <person name="King A."/>
            <person name="Knights A.J."/>
            <person name="Lad H."/>
            <person name="Laird G."/>
            <person name="Lawlor S."/>
            <person name="Leongamornlert D.A."/>
            <person name="Lloyd D.M."/>
            <person name="Loveland J."/>
            <person name="Lovell J."/>
            <person name="Lush M.J."/>
            <person name="Lyne R."/>
            <person name="Martin S."/>
            <person name="Mashreghi-Mohammadi M."/>
            <person name="Matthews L."/>
            <person name="Matthews N.S.W."/>
            <person name="McLaren S."/>
            <person name="Milne S."/>
            <person name="Mistry S."/>
            <person name="Moore M.J.F."/>
            <person name="Nickerson T."/>
            <person name="O'Dell C.N."/>
            <person name="Oliver K."/>
            <person name="Palmeiri A."/>
            <person name="Palmer S.A."/>
            <person name="Parker A."/>
            <person name="Patel D."/>
            <person name="Pearce A.V."/>
            <person name="Peck A.I."/>
            <person name="Pelan S."/>
            <person name="Phelps K."/>
            <person name="Phillimore B.J."/>
            <person name="Plumb R."/>
            <person name="Rajan J."/>
            <person name="Raymond C."/>
            <person name="Rouse G."/>
            <person name="Saenphimmachak C."/>
            <person name="Sehra H.K."/>
            <person name="Sheridan E."/>
            <person name="Shownkeen R."/>
            <person name="Sims S."/>
            <person name="Skuce C.D."/>
            <person name="Smith M."/>
            <person name="Steward C."/>
            <person name="Subramanian S."/>
            <person name="Sycamore N."/>
            <person name="Tracey A."/>
            <person name="Tromans A."/>
            <person name="Van Helmond Z."/>
            <person name="Wall M."/>
            <person name="Wallis J.M."/>
            <person name="White S."/>
            <person name="Whitehead S.L."/>
            <person name="Wilkinson J.E."/>
            <person name="Willey D.L."/>
            <person name="Williams H."/>
            <person name="Wilming L."/>
            <person name="Wray P.W."/>
            <person name="Wu Z."/>
            <person name="Coulson A."/>
            <person name="Vaudin M."/>
            <person name="Sulston J.E."/>
            <person name="Durbin R.M."/>
            <person name="Hubbard T."/>
            <person name="Wooster R."/>
            <person name="Dunham I."/>
            <person name="Carter N.P."/>
            <person name="McVean G."/>
            <person name="Ross M.T."/>
            <person name="Harrow J."/>
            <person name="Olson M.V."/>
            <person name="Beck S."/>
            <person name="Rogers J."/>
            <person name="Bentley D.R."/>
        </authorList>
    </citation>
    <scope>NUCLEOTIDE SEQUENCE [LARGE SCALE GENOMIC DNA]</scope>
</reference>
<reference key="3">
    <citation type="journal article" date="2004" name="Genome Res.">
        <title>The status, quality, and expansion of the NIH full-length cDNA project: the Mammalian Gene Collection (MGC).</title>
        <authorList>
            <consortium name="The MGC Project Team"/>
        </authorList>
    </citation>
    <scope>NUCLEOTIDE SEQUENCE [LARGE SCALE MRNA]</scope>
    <scope>VARIANT SER-126</scope>
</reference>
<reference key="4">
    <citation type="journal article" date="2006" name="J. Biol. Chem.">
        <title>Peptidoglycan recognition proteins are a new class of human bactericidal proteins.</title>
        <authorList>
            <person name="Lu X."/>
            <person name="Wang M."/>
            <person name="Qi J."/>
            <person name="Wang H."/>
            <person name="Li X."/>
            <person name="Gupta D."/>
            <person name="Dziarski R."/>
        </authorList>
    </citation>
    <scope>FUNCTION</scope>
    <scope>SUBUNIT</scope>
    <scope>GLYCOSYLATION</scope>
    <scope>SUBCELLULAR LOCATION</scope>
    <scope>INDUCTION</scope>
    <scope>TISSUE SPECIFICITY</scope>
</reference>
<reference key="5">
    <citation type="journal article" date="2004" name="J. Biol. Chem.">
        <title>Crystal structure of the C-terminal peptidoglycan-binding domain of human peptidoglycan recognition protein Ialpha.</title>
        <authorList>
            <person name="Guan R."/>
            <person name="Malchiodi E.L."/>
            <person name="Wang Q."/>
            <person name="Schuck P."/>
            <person name="Mariuzza R.A."/>
        </authorList>
    </citation>
    <scope>X-RAY CRYSTALLOGRAPHY (1.65 ANGSTROMS) OF 177-341</scope>
    <scope>SUBUNIT</scope>
</reference>
<reference key="6">
    <citation type="journal article" date="2004" name="Proc. Natl. Acad. Sci. U.S.A.">
        <title>Structural basis for peptidoglycan binding by peptidoglycan recognition proteins.</title>
        <authorList>
            <person name="Guan R."/>
            <person name="Roychowdhury A."/>
            <person name="Ember B."/>
            <person name="Kumar S."/>
            <person name="Boons G.-J."/>
            <person name="Mariuzza R.A."/>
        </authorList>
    </citation>
    <scope>X-RAY CRYSTALLOGRAPHY (2.30 ANGSTROMS) OF 177-341 IN COMPLEX WITH MUREIN FRAGMENT</scope>
</reference>
<reference key="7">
    <citation type="journal article" date="2006" name="Protein Sci.">
        <title>Crystal structure of human peptidoglycan recognition protein I alpha bound to a muramyl pentapeptide from Gram-positive bacteria.</title>
        <authorList>
            <person name="Guan R."/>
            <person name="Brown P.H."/>
            <person name="Swaminathan C.P."/>
            <person name="Roychowdhury A."/>
            <person name="Boons G.-J."/>
            <person name="Mariuzza R.A."/>
        </authorList>
    </citation>
    <scope>X-RAY CRYSTALLOGRAPHY (2.1 ANGSTROMS) OF 177-341 IN COMPLEX WITH MUREIN FRAGMENT</scope>
</reference>
<comment type="function">
    <text evidence="6">Pattern receptor that binds to murein peptidoglycans (PGN) of Gram-positive bacteria. Has bactericidal activity towards Gram-positive bacteria. May kill Gram-positive bacteria by interfering with peptidoglycan biosynthesis. Also binds to Gram-negative bacteria, and has bacteriostatic activity towards Gram-negative bacteria. Plays a role in innate immunity.</text>
</comment>
<comment type="subunit">
    <text evidence="3 5 6 7">Monomer. Homodimer; disulfide-linked. Heterodimer with PGLYRP4; disulfide-linked.</text>
</comment>
<comment type="interaction">
    <interactant intactId="EBI-12339509">
        <id>Q96LB9</id>
    </interactant>
    <interactant intactId="EBI-355710">
        <id>P48643</id>
        <label>CCT5</label>
    </interactant>
    <organismsDiffer>false</organismsDiffer>
    <experiments>3</experiments>
</comment>
<comment type="interaction">
    <interactant intactId="EBI-12339509">
        <id>Q96LB9</id>
    </interactant>
    <interactant intactId="EBI-7062247">
        <id>Q9UHD4</id>
        <label>CIDEB</label>
    </interactant>
    <organismsDiffer>false</organismsDiffer>
    <experiments>3</experiments>
</comment>
<comment type="interaction">
    <interactant intactId="EBI-12339509">
        <id>Q96LB9</id>
    </interactant>
    <interactant intactId="EBI-2115097">
        <id>P07339</id>
        <label>CTSD</label>
    </interactant>
    <organismsDiffer>false</organismsDiffer>
    <experiments>3</experiments>
</comment>
<comment type="interaction">
    <interactant intactId="EBI-12339509">
        <id>Q96LB9</id>
    </interactant>
    <interactant intactId="EBI-11022401">
        <id>Q96HY7</id>
        <label>DHTKD1</label>
    </interactant>
    <organismsDiffer>false</organismsDiffer>
    <experiments>2</experiments>
</comment>
<comment type="interaction">
    <interactant intactId="EBI-12339509">
        <id>Q96LB9</id>
    </interactant>
    <interactant intactId="EBI-18304435">
        <id>Q5JX71</id>
        <label>FAM209A</label>
    </interactant>
    <organismsDiffer>false</organismsDiffer>
    <experiments>3</experiments>
</comment>
<comment type="interaction">
    <interactant intactId="EBI-12339509">
        <id>Q96LB9</id>
    </interactant>
    <interactant intactId="EBI-747754">
        <id>P28799</id>
        <label>GRN</label>
    </interactant>
    <organismsDiffer>false</organismsDiffer>
    <experiments>3</experiments>
</comment>
<comment type="interaction">
    <interactant intactId="EBI-12339509">
        <id>Q96LB9</id>
    </interactant>
    <interactant intactId="EBI-742664">
        <id>Q9BPX1</id>
        <label>HSD17B14</label>
    </interactant>
    <organismsDiffer>false</organismsDiffer>
    <experiments>3</experiments>
</comment>
<comment type="interaction">
    <interactant intactId="EBI-12339509">
        <id>Q96LB9</id>
    </interactant>
    <interactant intactId="EBI-352682">
        <id>P04792</id>
        <label>HSPB1</label>
    </interactant>
    <organismsDiffer>false</organismsDiffer>
    <experiments>3</experiments>
</comment>
<comment type="interaction">
    <interactant intactId="EBI-12339509">
        <id>Q96LB9</id>
    </interactant>
    <interactant intactId="EBI-10975473">
        <id>O60333-2</id>
        <label>KIF1B</label>
    </interactant>
    <organismsDiffer>false</organismsDiffer>
    <experiments>3</experiments>
</comment>
<comment type="interaction">
    <interactant intactId="EBI-12339509">
        <id>Q96LB9</id>
    </interactant>
    <interactant intactId="EBI-1047093">
        <id>O76011</id>
        <label>KRT34</label>
    </interactant>
    <organismsDiffer>false</organismsDiffer>
    <experiments>3</experiments>
</comment>
<comment type="interaction">
    <interactant intactId="EBI-12339509">
        <id>Q96LB9</id>
    </interactant>
    <interactant intactId="EBI-475646">
        <id>P07196</id>
        <label>NEFL</label>
    </interactant>
    <organismsDiffer>false</organismsDiffer>
    <experiments>3</experiments>
</comment>
<comment type="interaction">
    <interactant intactId="EBI-12339509">
        <id>Q96LB9</id>
    </interactant>
    <interactant intactId="EBI-21251460">
        <id>O60260-5</id>
        <label>PRKN</label>
    </interactant>
    <organismsDiffer>false</organismsDiffer>
    <experiments>3</experiments>
</comment>
<comment type="interaction">
    <interactant intactId="EBI-12339509">
        <id>Q96LB9</id>
    </interactant>
    <interactant intactId="EBI-749195">
        <id>P60891</id>
        <label>PRPS1</label>
    </interactant>
    <organismsDiffer>false</organismsDiffer>
    <experiments>3</experiments>
</comment>
<comment type="interaction">
    <interactant intactId="EBI-12339509">
        <id>Q96LB9</id>
    </interactant>
    <interactant intactId="EBI-720609">
        <id>O76024</id>
        <label>WFS1</label>
    </interactant>
    <organismsDiffer>false</organismsDiffer>
    <experiments>3</experiments>
</comment>
<comment type="subcellular location">
    <subcellularLocation>
        <location evidence="6">Secreted</location>
    </subcellularLocation>
</comment>
<comment type="tissue specificity">
    <text evidence="2 6">Detected in skin epidermis, eccrine sweat glands and ducts, ciliary body epithelial cells of the eye, in small intestine, colon, stomach and in mature epithelial cells of the tongue (at protein level). Highly expressed in skin and esophagus, expressed also in tonsils and thymus and to a much lesser extent in the stomach, descending colon, rectum and brain.</text>
</comment>
<comment type="induction">
    <text evidence="6">Up-regulated by exposure to Gram-positive and Gram-negative bacteria.</text>
</comment>
<comment type="PTM">
    <text evidence="6">N-glycosylated.</text>
</comment>
<comment type="similarity">
    <text evidence="8">Belongs to the N-acetylmuramoyl-L-alanine amidase 2 family.</text>
</comment>
<evidence type="ECO:0000255" key="1"/>
<evidence type="ECO:0000269" key="2">
    <source>
    </source>
</evidence>
<evidence type="ECO:0000269" key="3">
    <source>
    </source>
</evidence>
<evidence type="ECO:0000269" key="4">
    <source>
    </source>
</evidence>
<evidence type="ECO:0000269" key="5">
    <source>
    </source>
</evidence>
<evidence type="ECO:0000269" key="6">
    <source>
    </source>
</evidence>
<evidence type="ECO:0000269" key="7">
    <source>
    </source>
</evidence>
<evidence type="ECO:0000305" key="8"/>
<evidence type="ECO:0007829" key="9">
    <source>
        <dbReference type="PDB" id="1SK3"/>
    </source>
</evidence>
<evidence type="ECO:0007829" key="10">
    <source>
        <dbReference type="PDB" id="1SK4"/>
    </source>
</evidence>
<evidence type="ECO:0007829" key="11">
    <source>
        <dbReference type="PDB" id="2APH"/>
    </source>
</evidence>
<feature type="signal peptide" evidence="1">
    <location>
        <begin position="1"/>
        <end position="17"/>
    </location>
</feature>
<feature type="chain" id="PRO_0000023923" description="Peptidoglycan recognition protein 3">
    <location>
        <begin position="18"/>
        <end position="341"/>
    </location>
</feature>
<feature type="domain" description="N-acetylmuramoyl-L-alanine amidase 1" evidence="1">
    <location>
        <begin position="77"/>
        <end position="179"/>
    </location>
</feature>
<feature type="domain" description="N-acetylmuramoyl-L-alanine amidase 2" evidence="1">
    <location>
        <begin position="200"/>
        <end position="325"/>
    </location>
</feature>
<feature type="region of interest" description="Interaction with murein">
    <location>
        <begin position="264"/>
        <end position="269"/>
    </location>
</feature>
<feature type="binding site">
    <location>
        <position position="231"/>
    </location>
    <ligand>
        <name>peptidoglycan</name>
        <dbReference type="ChEBI" id="CHEBI:8005"/>
    </ligand>
</feature>
<feature type="binding site">
    <location>
        <position position="235"/>
    </location>
    <ligand>
        <name>peptidoglycan</name>
        <dbReference type="ChEBI" id="CHEBI:8005"/>
    </ligand>
</feature>
<feature type="binding site">
    <location>
        <position position="242"/>
    </location>
    <ligand>
        <name>peptidoglycan</name>
        <dbReference type="ChEBI" id="CHEBI:8005"/>
    </ligand>
</feature>
<feature type="glycosylation site" description="N-linked (GlcNAc...) asparagine" evidence="1">
    <location>
        <position position="113"/>
    </location>
</feature>
<feature type="disulfide bond">
    <location>
        <begin position="178"/>
        <end position="300"/>
    </location>
</feature>
<feature type="disulfide bond">
    <location>
        <begin position="194"/>
        <end position="238"/>
    </location>
</feature>
<feature type="disulfide bond">
    <location>
        <begin position="214"/>
        <end position="220"/>
    </location>
</feature>
<feature type="sequence variant" id="VAR_061515" description="In dbSNP:rs55991125.">
    <original>A</original>
    <variation>T</variation>
    <location>
        <position position="35"/>
    </location>
</feature>
<feature type="sequence variant" id="VAR_024561" description="In dbSNP:rs843971." evidence="4">
    <original>G</original>
    <variation>S</variation>
    <location>
        <position position="126"/>
    </location>
</feature>
<feature type="helix" evidence="10">
    <location>
        <begin position="184"/>
        <end position="187"/>
    </location>
</feature>
<feature type="strand" evidence="10">
    <location>
        <begin position="199"/>
        <end position="208"/>
    </location>
</feature>
<feature type="helix" evidence="10">
    <location>
        <begin position="217"/>
        <end position="233"/>
    </location>
</feature>
<feature type="strand" evidence="10">
    <location>
        <begin position="243"/>
        <end position="246"/>
    </location>
</feature>
<feature type="strand" evidence="10">
    <location>
        <begin position="252"/>
        <end position="256"/>
    </location>
</feature>
<feature type="strand" evidence="11">
    <location>
        <begin position="258"/>
        <end position="260"/>
    </location>
</feature>
<feature type="strand" evidence="9">
    <location>
        <begin position="263"/>
        <end position="265"/>
    </location>
</feature>
<feature type="turn" evidence="10">
    <location>
        <begin position="269"/>
        <end position="271"/>
    </location>
</feature>
<feature type="strand" evidence="10">
    <location>
        <begin position="272"/>
        <end position="279"/>
    </location>
</feature>
<feature type="strand" evidence="10">
    <location>
        <begin position="282"/>
        <end position="284"/>
    </location>
</feature>
<feature type="helix" evidence="10">
    <location>
        <begin position="288"/>
        <end position="303"/>
    </location>
</feature>
<feature type="strand" evidence="10">
    <location>
        <begin position="306"/>
        <end position="315"/>
    </location>
</feature>
<feature type="helix" evidence="10">
    <location>
        <begin position="316"/>
        <end position="318"/>
    </location>
</feature>
<feature type="strand" evidence="11">
    <location>
        <begin position="320"/>
        <end position="322"/>
    </location>
</feature>
<feature type="helix" evidence="10">
    <location>
        <begin position="328"/>
        <end position="333"/>
    </location>
</feature>
<feature type="turn" evidence="10">
    <location>
        <begin position="337"/>
        <end position="340"/>
    </location>
</feature>
<sequence length="341" mass="37611">MGTLPWLLAFFILGLQAWDTPTIVSRKEWGARPLACRALLTLPVAYIITDQLPGMQCQQQSVCSQMLRGLQSHSVYTIGWCDVAYNFLVGDDGRVYEGVGWNIQGLHTQGYNNISLGIAFFGNKIGSSPSPAALSAAEGLISYAIQKGHLSPRYIQPLLLKEETCLDPQHPVMPRKVCPNIIKRSAWEARETHCPKMNLPAKYVIIIHTAGTSCTVSTDCQTVVRNIQSFHMDTRNFCDIGYHFLVGQDGGVYEGVGWHIQGSHTYGFNDIALGIAFIGYFVEKPPNAAALEAAQDLIQCAVVEGYLTPNYLLMGHSDVVNILSPGQALYNIISTWPHFKH</sequence>